<protein>
    <recommendedName>
        <fullName evidence="1">Glycine cleavage system H protein</fullName>
    </recommendedName>
</protein>
<feature type="chain" id="PRO_0000302431" description="Glycine cleavage system H protein">
    <location>
        <begin position="1"/>
        <end position="129"/>
    </location>
</feature>
<feature type="domain" description="Lipoyl-binding" evidence="2">
    <location>
        <begin position="24"/>
        <end position="106"/>
    </location>
</feature>
<feature type="modified residue" description="N6-lipoyllysine" evidence="1">
    <location>
        <position position="65"/>
    </location>
</feature>
<reference key="1">
    <citation type="submission" date="2006-08" db="EMBL/GenBank/DDBJ databases">
        <title>Complete sequence of Shewanella frigidimarina NCIMB 400.</title>
        <authorList>
            <consortium name="US DOE Joint Genome Institute"/>
            <person name="Copeland A."/>
            <person name="Lucas S."/>
            <person name="Lapidus A."/>
            <person name="Barry K."/>
            <person name="Detter J.C."/>
            <person name="Glavina del Rio T."/>
            <person name="Hammon N."/>
            <person name="Israni S."/>
            <person name="Dalin E."/>
            <person name="Tice H."/>
            <person name="Pitluck S."/>
            <person name="Fredrickson J.K."/>
            <person name="Kolker E."/>
            <person name="McCuel L.A."/>
            <person name="DiChristina T."/>
            <person name="Nealson K.H."/>
            <person name="Newman D."/>
            <person name="Tiedje J.M."/>
            <person name="Zhou J."/>
            <person name="Romine M.F."/>
            <person name="Culley D.E."/>
            <person name="Serres M."/>
            <person name="Chertkov O."/>
            <person name="Brettin T."/>
            <person name="Bruce D."/>
            <person name="Han C."/>
            <person name="Tapia R."/>
            <person name="Gilna P."/>
            <person name="Schmutz J."/>
            <person name="Larimer F."/>
            <person name="Land M."/>
            <person name="Hauser L."/>
            <person name="Kyrpides N."/>
            <person name="Mikhailova N."/>
            <person name="Richardson P."/>
        </authorList>
    </citation>
    <scope>NUCLEOTIDE SEQUENCE [LARGE SCALE GENOMIC DNA]</scope>
    <source>
        <strain>NCIMB 400</strain>
    </source>
</reference>
<dbReference type="EMBL" id="CP000447">
    <property type="protein sequence ID" value="ABI72986.1"/>
    <property type="molecule type" value="Genomic_DNA"/>
</dbReference>
<dbReference type="RefSeq" id="WP_011638589.1">
    <property type="nucleotide sequence ID" value="NC_008345.1"/>
</dbReference>
<dbReference type="SMR" id="Q07YC8"/>
<dbReference type="STRING" id="318167.Sfri_3150"/>
<dbReference type="KEGG" id="sfr:Sfri_3150"/>
<dbReference type="eggNOG" id="COG0509">
    <property type="taxonomic scope" value="Bacteria"/>
</dbReference>
<dbReference type="HOGENOM" id="CLU_097408_2_1_6"/>
<dbReference type="OrthoDB" id="9796712at2"/>
<dbReference type="Proteomes" id="UP000000684">
    <property type="component" value="Chromosome"/>
</dbReference>
<dbReference type="GO" id="GO:0005829">
    <property type="term" value="C:cytosol"/>
    <property type="evidence" value="ECO:0007669"/>
    <property type="project" value="TreeGrafter"/>
</dbReference>
<dbReference type="GO" id="GO:0005960">
    <property type="term" value="C:glycine cleavage complex"/>
    <property type="evidence" value="ECO:0007669"/>
    <property type="project" value="InterPro"/>
</dbReference>
<dbReference type="GO" id="GO:0019464">
    <property type="term" value="P:glycine decarboxylation via glycine cleavage system"/>
    <property type="evidence" value="ECO:0007669"/>
    <property type="project" value="UniProtKB-UniRule"/>
</dbReference>
<dbReference type="CDD" id="cd06848">
    <property type="entry name" value="GCS_H"/>
    <property type="match status" value="1"/>
</dbReference>
<dbReference type="FunFam" id="2.40.50.100:FF:000011">
    <property type="entry name" value="Glycine cleavage system H protein"/>
    <property type="match status" value="1"/>
</dbReference>
<dbReference type="Gene3D" id="2.40.50.100">
    <property type="match status" value="1"/>
</dbReference>
<dbReference type="HAMAP" id="MF_00272">
    <property type="entry name" value="GcvH"/>
    <property type="match status" value="1"/>
</dbReference>
<dbReference type="InterPro" id="IPR003016">
    <property type="entry name" value="2-oxoA_DH_lipoyl-BS"/>
</dbReference>
<dbReference type="InterPro" id="IPR000089">
    <property type="entry name" value="Biotin_lipoyl"/>
</dbReference>
<dbReference type="InterPro" id="IPR002930">
    <property type="entry name" value="GCV_H"/>
</dbReference>
<dbReference type="InterPro" id="IPR033753">
    <property type="entry name" value="GCV_H/Fam206"/>
</dbReference>
<dbReference type="InterPro" id="IPR017453">
    <property type="entry name" value="GCV_H_sub"/>
</dbReference>
<dbReference type="InterPro" id="IPR011053">
    <property type="entry name" value="Single_hybrid_motif"/>
</dbReference>
<dbReference type="NCBIfam" id="TIGR00527">
    <property type="entry name" value="gcvH"/>
    <property type="match status" value="1"/>
</dbReference>
<dbReference type="NCBIfam" id="NF002270">
    <property type="entry name" value="PRK01202.1"/>
    <property type="match status" value="1"/>
</dbReference>
<dbReference type="PANTHER" id="PTHR11715">
    <property type="entry name" value="GLYCINE CLEAVAGE SYSTEM H PROTEIN"/>
    <property type="match status" value="1"/>
</dbReference>
<dbReference type="PANTHER" id="PTHR11715:SF3">
    <property type="entry name" value="GLYCINE CLEAVAGE SYSTEM H PROTEIN-RELATED"/>
    <property type="match status" value="1"/>
</dbReference>
<dbReference type="Pfam" id="PF01597">
    <property type="entry name" value="GCV_H"/>
    <property type="match status" value="1"/>
</dbReference>
<dbReference type="SUPFAM" id="SSF51230">
    <property type="entry name" value="Single hybrid motif"/>
    <property type="match status" value="1"/>
</dbReference>
<dbReference type="PROSITE" id="PS50968">
    <property type="entry name" value="BIOTINYL_LIPOYL"/>
    <property type="match status" value="1"/>
</dbReference>
<dbReference type="PROSITE" id="PS00189">
    <property type="entry name" value="LIPOYL"/>
    <property type="match status" value="1"/>
</dbReference>
<accession>Q07YC8</accession>
<gene>
    <name evidence="1" type="primary">gcvH</name>
    <name type="ordered locus">Sfri_3150</name>
</gene>
<comment type="function">
    <text evidence="1">The glycine cleavage system catalyzes the degradation of glycine. The H protein shuttles the methylamine group of glycine from the P protein to the T protein.</text>
</comment>
<comment type="cofactor">
    <cofactor evidence="1">
        <name>(R)-lipoate</name>
        <dbReference type="ChEBI" id="CHEBI:83088"/>
    </cofactor>
    <text evidence="1">Binds 1 lipoyl cofactor covalently.</text>
</comment>
<comment type="subunit">
    <text evidence="1">The glycine cleavage system is composed of four proteins: P, T, L and H.</text>
</comment>
<comment type="similarity">
    <text evidence="1">Belongs to the GcvH family.</text>
</comment>
<name>GCSH_SHEFN</name>
<keyword id="KW-0450">Lipoyl</keyword>
<keyword id="KW-1185">Reference proteome</keyword>
<organism>
    <name type="scientific">Shewanella frigidimarina (strain NCIMB 400)</name>
    <dbReference type="NCBI Taxonomy" id="318167"/>
    <lineage>
        <taxon>Bacteria</taxon>
        <taxon>Pseudomonadati</taxon>
        <taxon>Pseudomonadota</taxon>
        <taxon>Gammaproteobacteria</taxon>
        <taxon>Alteromonadales</taxon>
        <taxon>Shewanellaceae</taxon>
        <taxon>Shewanella</taxon>
    </lineage>
</organism>
<evidence type="ECO:0000255" key="1">
    <source>
        <dbReference type="HAMAP-Rule" id="MF_00272"/>
    </source>
</evidence>
<evidence type="ECO:0000255" key="2">
    <source>
        <dbReference type="PROSITE-ProRule" id="PRU01066"/>
    </source>
</evidence>
<sequence>MSTIPADLKYASSHEWIRKESDGSYTVGITEHAQELLGDMVFVELPEVGDTVTAGEDCAVAESVKAASDIYAPISGEVIAVNESLEDSPELVNSDAFGDGWFFRVMPSDESEVDALLDADGYQEVIDEE</sequence>
<proteinExistence type="inferred from homology"/>